<dbReference type="EC" id="2.8.1.8" evidence="1"/>
<dbReference type="EMBL" id="EQ999978">
    <property type="protein sequence ID" value="EEQ90787.1"/>
    <property type="molecule type" value="Genomic_DNA"/>
</dbReference>
<dbReference type="RefSeq" id="XP_045277458.1">
    <property type="nucleotide sequence ID" value="XM_045421615.1"/>
</dbReference>
<dbReference type="SMR" id="C5GPL2"/>
<dbReference type="STRING" id="559297.C5GPL2"/>
<dbReference type="GeneID" id="69027861"/>
<dbReference type="VEuPathDB" id="FungiDB:BDCG_05907"/>
<dbReference type="eggNOG" id="KOG2672">
    <property type="taxonomic scope" value="Eukaryota"/>
</dbReference>
<dbReference type="HOGENOM" id="CLU_033144_0_1_1"/>
<dbReference type="OMA" id="PYCDIDF"/>
<dbReference type="UniPathway" id="UPA00538">
    <property type="reaction ID" value="UER00593"/>
</dbReference>
<dbReference type="GO" id="GO:0005739">
    <property type="term" value="C:mitochondrion"/>
    <property type="evidence" value="ECO:0007669"/>
    <property type="project" value="UniProtKB-SubCell"/>
</dbReference>
<dbReference type="GO" id="GO:0051539">
    <property type="term" value="F:4 iron, 4 sulfur cluster binding"/>
    <property type="evidence" value="ECO:0007669"/>
    <property type="project" value="UniProtKB-UniRule"/>
</dbReference>
<dbReference type="GO" id="GO:0016992">
    <property type="term" value="F:lipoate synthase activity"/>
    <property type="evidence" value="ECO:0007669"/>
    <property type="project" value="UniProtKB-UniRule"/>
</dbReference>
<dbReference type="GO" id="GO:0046872">
    <property type="term" value="F:metal ion binding"/>
    <property type="evidence" value="ECO:0007669"/>
    <property type="project" value="UniProtKB-KW"/>
</dbReference>
<dbReference type="CDD" id="cd01335">
    <property type="entry name" value="Radical_SAM"/>
    <property type="match status" value="1"/>
</dbReference>
<dbReference type="FunFam" id="3.20.20.70:FF:000036">
    <property type="entry name" value="Lipoyl synthase, mitochondrial"/>
    <property type="match status" value="1"/>
</dbReference>
<dbReference type="Gene3D" id="3.20.20.70">
    <property type="entry name" value="Aldolase class I"/>
    <property type="match status" value="1"/>
</dbReference>
<dbReference type="HAMAP" id="MF_00206">
    <property type="entry name" value="Lipoyl_synth"/>
    <property type="match status" value="1"/>
</dbReference>
<dbReference type="InterPro" id="IPR013785">
    <property type="entry name" value="Aldolase_TIM"/>
</dbReference>
<dbReference type="InterPro" id="IPR006638">
    <property type="entry name" value="Elp3/MiaA/NifB-like_rSAM"/>
</dbReference>
<dbReference type="InterPro" id="IPR031691">
    <property type="entry name" value="LIAS_N"/>
</dbReference>
<dbReference type="InterPro" id="IPR003698">
    <property type="entry name" value="Lipoyl_synth"/>
</dbReference>
<dbReference type="InterPro" id="IPR007197">
    <property type="entry name" value="rSAM"/>
</dbReference>
<dbReference type="NCBIfam" id="TIGR00510">
    <property type="entry name" value="lipA"/>
    <property type="match status" value="1"/>
</dbReference>
<dbReference type="NCBIfam" id="NF004019">
    <property type="entry name" value="PRK05481.1"/>
    <property type="match status" value="1"/>
</dbReference>
<dbReference type="NCBIfam" id="NF009544">
    <property type="entry name" value="PRK12928.1"/>
    <property type="match status" value="1"/>
</dbReference>
<dbReference type="PANTHER" id="PTHR10949">
    <property type="entry name" value="LIPOYL SYNTHASE"/>
    <property type="match status" value="1"/>
</dbReference>
<dbReference type="PANTHER" id="PTHR10949:SF0">
    <property type="entry name" value="LIPOYL SYNTHASE, MITOCHONDRIAL"/>
    <property type="match status" value="1"/>
</dbReference>
<dbReference type="Pfam" id="PF16881">
    <property type="entry name" value="LIAS_N"/>
    <property type="match status" value="1"/>
</dbReference>
<dbReference type="Pfam" id="PF04055">
    <property type="entry name" value="Radical_SAM"/>
    <property type="match status" value="1"/>
</dbReference>
<dbReference type="SFLD" id="SFLDF00271">
    <property type="entry name" value="lipoyl_synthase"/>
    <property type="match status" value="1"/>
</dbReference>
<dbReference type="SFLD" id="SFLDG01058">
    <property type="entry name" value="lipoyl_synthase_like"/>
    <property type="match status" value="1"/>
</dbReference>
<dbReference type="SMART" id="SM00729">
    <property type="entry name" value="Elp3"/>
    <property type="match status" value="1"/>
</dbReference>
<dbReference type="SUPFAM" id="SSF102114">
    <property type="entry name" value="Radical SAM enzymes"/>
    <property type="match status" value="1"/>
</dbReference>
<dbReference type="PROSITE" id="PS51918">
    <property type="entry name" value="RADICAL_SAM"/>
    <property type="match status" value="1"/>
</dbReference>
<keyword id="KW-0004">4Fe-4S</keyword>
<keyword id="KW-0408">Iron</keyword>
<keyword id="KW-0411">Iron-sulfur</keyword>
<keyword id="KW-0479">Metal-binding</keyword>
<keyword id="KW-0496">Mitochondrion</keyword>
<keyword id="KW-0949">S-adenosyl-L-methionine</keyword>
<keyword id="KW-0808">Transferase</keyword>
<keyword id="KW-0809">Transit peptide</keyword>
<reference key="1">
    <citation type="journal article" date="2015" name="PLoS Genet.">
        <title>The dynamic genome and transcriptome of the human fungal pathogen Blastomyces and close relative Emmonsia.</title>
        <authorList>
            <person name="Munoz J.F."/>
            <person name="Gauthier G.M."/>
            <person name="Desjardins C.A."/>
            <person name="Gallo J.E."/>
            <person name="Holder J."/>
            <person name="Sullivan T.D."/>
            <person name="Marty A.J."/>
            <person name="Carmen J.C."/>
            <person name="Chen Z."/>
            <person name="Ding L."/>
            <person name="Gujja S."/>
            <person name="Magrini V."/>
            <person name="Misas E."/>
            <person name="Mitreva M."/>
            <person name="Priest M."/>
            <person name="Saif S."/>
            <person name="Whiston E.A."/>
            <person name="Young S."/>
            <person name="Zeng Q."/>
            <person name="Goldman W.E."/>
            <person name="Mardis E.R."/>
            <person name="Taylor J.W."/>
            <person name="McEwen J.G."/>
            <person name="Clay O.K."/>
            <person name="Klein B.S."/>
            <person name="Cuomo C.A."/>
        </authorList>
    </citation>
    <scope>NUCLEOTIDE SEQUENCE [LARGE SCALE GENOMIC DNA]</scope>
    <source>
        <strain>ER-3 / ATCC MYA-2586</strain>
    </source>
</reference>
<name>LIPA_AJEDR</name>
<organism>
    <name type="scientific">Ajellomyces dermatitidis (strain ER-3 / ATCC MYA-2586)</name>
    <name type="common">Blastomyces dermatitidis</name>
    <dbReference type="NCBI Taxonomy" id="559297"/>
    <lineage>
        <taxon>Eukaryota</taxon>
        <taxon>Fungi</taxon>
        <taxon>Dikarya</taxon>
        <taxon>Ascomycota</taxon>
        <taxon>Pezizomycotina</taxon>
        <taxon>Eurotiomycetes</taxon>
        <taxon>Eurotiomycetidae</taxon>
        <taxon>Onygenales</taxon>
        <taxon>Ajellomycetaceae</taxon>
        <taxon>Blastomyces</taxon>
    </lineage>
</organism>
<gene>
    <name type="ORF">BDCG_05907</name>
</gene>
<comment type="function">
    <text evidence="1">Catalyzes the radical-mediated insertion of two sulfur atoms into the C-6 and C-8 positions of the octanoyl moiety bound to the lipoyl domains of lipoate-dependent enzymes, thereby converting the octanoylated domains into lipoylated derivatives.</text>
</comment>
<comment type="catalytic activity">
    <reaction evidence="1">
        <text>[[Fe-S] cluster scaffold protein carrying a second [4Fe-4S](2+) cluster] + N(6)-octanoyl-L-lysyl-[protein] + 2 oxidized [2Fe-2S]-[ferredoxin] + 2 S-adenosyl-L-methionine + 4 H(+) = [[Fe-S] cluster scaffold protein] + N(6)-[(R)-dihydrolipoyl]-L-lysyl-[protein] + 4 Fe(3+) + 2 hydrogen sulfide + 2 5'-deoxyadenosine + 2 L-methionine + 2 reduced [2Fe-2S]-[ferredoxin]</text>
        <dbReference type="Rhea" id="RHEA:16585"/>
        <dbReference type="Rhea" id="RHEA-COMP:9928"/>
        <dbReference type="Rhea" id="RHEA-COMP:10000"/>
        <dbReference type="Rhea" id="RHEA-COMP:10001"/>
        <dbReference type="Rhea" id="RHEA-COMP:10475"/>
        <dbReference type="Rhea" id="RHEA-COMP:14568"/>
        <dbReference type="Rhea" id="RHEA-COMP:14569"/>
        <dbReference type="ChEBI" id="CHEBI:15378"/>
        <dbReference type="ChEBI" id="CHEBI:17319"/>
        <dbReference type="ChEBI" id="CHEBI:29034"/>
        <dbReference type="ChEBI" id="CHEBI:29919"/>
        <dbReference type="ChEBI" id="CHEBI:33722"/>
        <dbReference type="ChEBI" id="CHEBI:33737"/>
        <dbReference type="ChEBI" id="CHEBI:33738"/>
        <dbReference type="ChEBI" id="CHEBI:57844"/>
        <dbReference type="ChEBI" id="CHEBI:59789"/>
        <dbReference type="ChEBI" id="CHEBI:78809"/>
        <dbReference type="ChEBI" id="CHEBI:83100"/>
        <dbReference type="EC" id="2.8.1.8"/>
    </reaction>
</comment>
<comment type="cofactor">
    <cofactor evidence="1">
        <name>[4Fe-4S] cluster</name>
        <dbReference type="ChEBI" id="CHEBI:49883"/>
    </cofactor>
    <text evidence="1">Binds 2 [4Fe-4S] clusters per subunit. One cluster is coordinated with 3 cysteines and an exchangeable S-adenosyl-L-methionine.</text>
</comment>
<comment type="pathway">
    <text evidence="1">Protein modification; protein lipoylation via endogenous pathway; protein N(6)-(lipoyl)lysine from octanoyl-[acyl-carrier-protein]: step 2/2.</text>
</comment>
<comment type="subcellular location">
    <subcellularLocation>
        <location evidence="1">Mitochondrion</location>
    </subcellularLocation>
</comment>
<comment type="similarity">
    <text evidence="1">Belongs to the radical SAM superfamily. Lipoyl synthase family.</text>
</comment>
<sequence>MAASTGKLRTLFSAHSSLSARPSSALPALRLTILRSYATTTPPDSSISDPSNSSTTVKRPPTAFKDKLNAGPAFSDFVSGKKDEPLDPAEAYALKTALVGPAGRKKEITRLPSWLKTPIPDSSNYKRIKNDLRGLNLHTVCEEARCPNISDCWGGSSKSAATATIMLMGDTCTRGCRFCSVKTSNKPPPLDPHEPENTAEALSRWGLGYVVLTSVDRDDLADGGARHFAETVLKIKQKAPNILVECLTGDYAGDLEMVALVANSGLDVYAHNVETVEALTPFVRDRRATFQQSLRVLKAAKATKPELITKTSLMLGLGETEAQLWDTLRALRAIDVDVVTFGQYMRPTKRHMAVHEYVRPDVFDMWKERALEMGFLYCASGPLVRSSYKAGEAFIENVLKKKRGKNVGSASGKGTTSENVEKLVAGEAVR</sequence>
<proteinExistence type="inferred from homology"/>
<accession>C5GPL2</accession>
<protein>
    <recommendedName>
        <fullName evidence="1">Lipoyl synthase, mitochondrial</fullName>
        <ecNumber evidence="1">2.8.1.8</ecNumber>
    </recommendedName>
    <alternativeName>
        <fullName evidence="1">Lipoate synthase</fullName>
        <shortName evidence="1">LS</shortName>
        <shortName evidence="1">Lip-syn</shortName>
    </alternativeName>
    <alternativeName>
        <fullName evidence="1">Lipoic acid synthase</fullName>
    </alternativeName>
</protein>
<evidence type="ECO:0000255" key="1">
    <source>
        <dbReference type="HAMAP-Rule" id="MF_03123"/>
    </source>
</evidence>
<evidence type="ECO:0000255" key="2">
    <source>
        <dbReference type="PROSITE-ProRule" id="PRU01266"/>
    </source>
</evidence>
<evidence type="ECO:0000256" key="3">
    <source>
        <dbReference type="SAM" id="MobiDB-lite"/>
    </source>
</evidence>
<feature type="transit peptide" description="Mitochondrion" evidence="1">
    <location>
        <begin position="1"/>
        <end position="37"/>
    </location>
</feature>
<feature type="chain" id="PRO_0000398248" description="Lipoyl synthase, mitochondrial">
    <location>
        <begin position="38"/>
        <end position="430"/>
    </location>
</feature>
<feature type="domain" description="Radical SAM core" evidence="2">
    <location>
        <begin position="155"/>
        <end position="376"/>
    </location>
</feature>
<feature type="region of interest" description="Disordered" evidence="3">
    <location>
        <begin position="40"/>
        <end position="63"/>
    </location>
</feature>
<feature type="compositionally biased region" description="Low complexity" evidence="3">
    <location>
        <begin position="40"/>
        <end position="56"/>
    </location>
</feature>
<feature type="binding site" evidence="1">
    <location>
        <position position="141"/>
    </location>
    <ligand>
        <name>[4Fe-4S] cluster</name>
        <dbReference type="ChEBI" id="CHEBI:49883"/>
        <label>1</label>
    </ligand>
</feature>
<feature type="binding site" evidence="1">
    <location>
        <position position="146"/>
    </location>
    <ligand>
        <name>[4Fe-4S] cluster</name>
        <dbReference type="ChEBI" id="CHEBI:49883"/>
        <label>1</label>
    </ligand>
</feature>
<feature type="binding site" evidence="1">
    <location>
        <position position="152"/>
    </location>
    <ligand>
        <name>[4Fe-4S] cluster</name>
        <dbReference type="ChEBI" id="CHEBI:49883"/>
        <label>1</label>
    </ligand>
</feature>
<feature type="binding site" evidence="1">
    <location>
        <position position="172"/>
    </location>
    <ligand>
        <name>[4Fe-4S] cluster</name>
        <dbReference type="ChEBI" id="CHEBI:49883"/>
        <label>2</label>
        <note>4Fe-4S-S-AdoMet</note>
    </ligand>
</feature>
<feature type="binding site" evidence="1">
    <location>
        <position position="176"/>
    </location>
    <ligand>
        <name>[4Fe-4S] cluster</name>
        <dbReference type="ChEBI" id="CHEBI:49883"/>
        <label>2</label>
        <note>4Fe-4S-S-AdoMet</note>
    </ligand>
</feature>
<feature type="binding site" evidence="1">
    <location>
        <position position="179"/>
    </location>
    <ligand>
        <name>[4Fe-4S] cluster</name>
        <dbReference type="ChEBI" id="CHEBI:49883"/>
        <label>2</label>
        <note>4Fe-4S-S-AdoMet</note>
    </ligand>
</feature>
<feature type="binding site" evidence="1">
    <location>
        <position position="387"/>
    </location>
    <ligand>
        <name>[4Fe-4S] cluster</name>
        <dbReference type="ChEBI" id="CHEBI:49883"/>
        <label>1</label>
    </ligand>
</feature>